<proteinExistence type="inferred from homology"/>
<evidence type="ECO:0000255" key="1">
    <source>
        <dbReference type="HAMAP-Rule" id="MF_00394"/>
    </source>
</evidence>
<accession>A4ST20</accession>
<comment type="function">
    <text evidence="1">Catalyzes the reduction of the glycolytic intermediate dihydroxyacetone phosphate (DHAP) to sn-glycerol 3-phosphate (G3P), the key precursor for phospholipid synthesis.</text>
</comment>
<comment type="catalytic activity">
    <reaction evidence="1">
        <text>sn-glycerol 3-phosphate + NAD(+) = dihydroxyacetone phosphate + NADH + H(+)</text>
        <dbReference type="Rhea" id="RHEA:11092"/>
        <dbReference type="ChEBI" id="CHEBI:15378"/>
        <dbReference type="ChEBI" id="CHEBI:57540"/>
        <dbReference type="ChEBI" id="CHEBI:57597"/>
        <dbReference type="ChEBI" id="CHEBI:57642"/>
        <dbReference type="ChEBI" id="CHEBI:57945"/>
        <dbReference type="EC" id="1.1.1.94"/>
    </reaction>
    <physiologicalReaction direction="right-to-left" evidence="1">
        <dbReference type="Rhea" id="RHEA:11094"/>
    </physiologicalReaction>
</comment>
<comment type="catalytic activity">
    <reaction evidence="1">
        <text>sn-glycerol 3-phosphate + NADP(+) = dihydroxyacetone phosphate + NADPH + H(+)</text>
        <dbReference type="Rhea" id="RHEA:11096"/>
        <dbReference type="ChEBI" id="CHEBI:15378"/>
        <dbReference type="ChEBI" id="CHEBI:57597"/>
        <dbReference type="ChEBI" id="CHEBI:57642"/>
        <dbReference type="ChEBI" id="CHEBI:57783"/>
        <dbReference type="ChEBI" id="CHEBI:58349"/>
        <dbReference type="EC" id="1.1.1.94"/>
    </reaction>
    <physiologicalReaction direction="right-to-left" evidence="1">
        <dbReference type="Rhea" id="RHEA:11098"/>
    </physiologicalReaction>
</comment>
<comment type="pathway">
    <text evidence="1">Membrane lipid metabolism; glycerophospholipid metabolism.</text>
</comment>
<comment type="subcellular location">
    <subcellularLocation>
        <location evidence="1">Cytoplasm</location>
    </subcellularLocation>
</comment>
<comment type="similarity">
    <text evidence="1">Belongs to the NAD-dependent glycerol-3-phosphate dehydrogenase family.</text>
</comment>
<sequence length="334" mass="35370">MADQIAISVLGAGSYGSALAISLARNGHPTLLWGHDPAHVAELEHDRCNKAFLPDVPFPADLQLTADLQRAVQAAPVLLLVVPSHVFGQVLSQVKPFLRPDTRIAWATKGLEPDSGRLLQDVARDVLGETIPLAVISGPTFAKELAAGLPTAISVASTHDDFADELSHLLHCGRSFRVYTNPDFVGLQLGGAVKNVIAIGAGLSDGLGFGANARTALITRGLVEMQRLGAALGADAKTFMGMAGLGDLVLTCTDNQSRNRRFGLALGAGKAVETAMAEIGQVVEGYRNTKEVHLLAARCGVEMPICEQIFQVLYQGKNPKEAAIALLSRDKRDE</sequence>
<keyword id="KW-0963">Cytoplasm</keyword>
<keyword id="KW-0444">Lipid biosynthesis</keyword>
<keyword id="KW-0443">Lipid metabolism</keyword>
<keyword id="KW-0520">NAD</keyword>
<keyword id="KW-0521">NADP</keyword>
<keyword id="KW-0547">Nucleotide-binding</keyword>
<keyword id="KW-0560">Oxidoreductase</keyword>
<keyword id="KW-0594">Phospholipid biosynthesis</keyword>
<keyword id="KW-1208">Phospholipid metabolism</keyword>
<name>GPDA_AERS4</name>
<reference key="1">
    <citation type="journal article" date="2008" name="BMC Genomics">
        <title>The genome of Aeromonas salmonicida subsp. salmonicida A449: insights into the evolution of a fish pathogen.</title>
        <authorList>
            <person name="Reith M.E."/>
            <person name="Singh R.K."/>
            <person name="Curtis B."/>
            <person name="Boyd J.M."/>
            <person name="Bouevitch A."/>
            <person name="Kimball J."/>
            <person name="Munholland J."/>
            <person name="Murphy C."/>
            <person name="Sarty D."/>
            <person name="Williams J."/>
            <person name="Nash J.H."/>
            <person name="Johnson S.C."/>
            <person name="Brown L.L."/>
        </authorList>
    </citation>
    <scope>NUCLEOTIDE SEQUENCE [LARGE SCALE GENOMIC DNA]</scope>
    <source>
        <strain>A449</strain>
    </source>
</reference>
<dbReference type="EC" id="1.1.1.94" evidence="1"/>
<dbReference type="EMBL" id="CP000644">
    <property type="protein sequence ID" value="ABO92042.1"/>
    <property type="molecule type" value="Genomic_DNA"/>
</dbReference>
<dbReference type="RefSeq" id="WP_005319805.1">
    <property type="nucleotide sequence ID" value="NC_009348.1"/>
</dbReference>
<dbReference type="SMR" id="A4ST20"/>
<dbReference type="STRING" id="29491.GCA_000820065_03452"/>
<dbReference type="GeneID" id="79877753"/>
<dbReference type="KEGG" id="asa:ASA_4101"/>
<dbReference type="eggNOG" id="COG0240">
    <property type="taxonomic scope" value="Bacteria"/>
</dbReference>
<dbReference type="HOGENOM" id="CLU_033449_0_2_6"/>
<dbReference type="UniPathway" id="UPA00940"/>
<dbReference type="Proteomes" id="UP000000225">
    <property type="component" value="Chromosome"/>
</dbReference>
<dbReference type="GO" id="GO:0005829">
    <property type="term" value="C:cytosol"/>
    <property type="evidence" value="ECO:0007669"/>
    <property type="project" value="TreeGrafter"/>
</dbReference>
<dbReference type="GO" id="GO:0047952">
    <property type="term" value="F:glycerol-3-phosphate dehydrogenase [NAD(P)+] activity"/>
    <property type="evidence" value="ECO:0007669"/>
    <property type="project" value="UniProtKB-UniRule"/>
</dbReference>
<dbReference type="GO" id="GO:0051287">
    <property type="term" value="F:NAD binding"/>
    <property type="evidence" value="ECO:0007669"/>
    <property type="project" value="InterPro"/>
</dbReference>
<dbReference type="GO" id="GO:0005975">
    <property type="term" value="P:carbohydrate metabolic process"/>
    <property type="evidence" value="ECO:0007669"/>
    <property type="project" value="InterPro"/>
</dbReference>
<dbReference type="GO" id="GO:0046167">
    <property type="term" value="P:glycerol-3-phosphate biosynthetic process"/>
    <property type="evidence" value="ECO:0007669"/>
    <property type="project" value="UniProtKB-UniRule"/>
</dbReference>
<dbReference type="GO" id="GO:0046168">
    <property type="term" value="P:glycerol-3-phosphate catabolic process"/>
    <property type="evidence" value="ECO:0007669"/>
    <property type="project" value="InterPro"/>
</dbReference>
<dbReference type="GO" id="GO:0046474">
    <property type="term" value="P:glycerophospholipid biosynthetic process"/>
    <property type="evidence" value="ECO:0007669"/>
    <property type="project" value="TreeGrafter"/>
</dbReference>
<dbReference type="FunFam" id="1.10.1040.10:FF:000001">
    <property type="entry name" value="Glycerol-3-phosphate dehydrogenase [NAD(P)+]"/>
    <property type="match status" value="1"/>
</dbReference>
<dbReference type="FunFam" id="3.40.50.720:FF:000019">
    <property type="entry name" value="Glycerol-3-phosphate dehydrogenase [NAD(P)+]"/>
    <property type="match status" value="1"/>
</dbReference>
<dbReference type="Gene3D" id="1.10.1040.10">
    <property type="entry name" value="N-(1-d-carboxylethyl)-l-norvaline Dehydrogenase, domain 2"/>
    <property type="match status" value="1"/>
</dbReference>
<dbReference type="Gene3D" id="3.40.50.720">
    <property type="entry name" value="NAD(P)-binding Rossmann-like Domain"/>
    <property type="match status" value="1"/>
</dbReference>
<dbReference type="HAMAP" id="MF_00394">
    <property type="entry name" value="NAD_Glyc3P_dehydrog"/>
    <property type="match status" value="1"/>
</dbReference>
<dbReference type="InterPro" id="IPR008927">
    <property type="entry name" value="6-PGluconate_DH-like_C_sf"/>
</dbReference>
<dbReference type="InterPro" id="IPR013328">
    <property type="entry name" value="6PGD_dom2"/>
</dbReference>
<dbReference type="InterPro" id="IPR006168">
    <property type="entry name" value="G3P_DH_NAD-dep"/>
</dbReference>
<dbReference type="InterPro" id="IPR006109">
    <property type="entry name" value="G3P_DH_NAD-dep_C"/>
</dbReference>
<dbReference type="InterPro" id="IPR011128">
    <property type="entry name" value="G3P_DH_NAD-dep_N"/>
</dbReference>
<dbReference type="InterPro" id="IPR036291">
    <property type="entry name" value="NAD(P)-bd_dom_sf"/>
</dbReference>
<dbReference type="NCBIfam" id="NF000939">
    <property type="entry name" value="PRK00094.1-1"/>
    <property type="match status" value="1"/>
</dbReference>
<dbReference type="NCBIfam" id="NF000940">
    <property type="entry name" value="PRK00094.1-2"/>
    <property type="match status" value="1"/>
</dbReference>
<dbReference type="NCBIfam" id="NF000942">
    <property type="entry name" value="PRK00094.1-4"/>
    <property type="match status" value="1"/>
</dbReference>
<dbReference type="PANTHER" id="PTHR11728">
    <property type="entry name" value="GLYCEROL-3-PHOSPHATE DEHYDROGENASE"/>
    <property type="match status" value="1"/>
</dbReference>
<dbReference type="PANTHER" id="PTHR11728:SF1">
    <property type="entry name" value="GLYCEROL-3-PHOSPHATE DEHYDROGENASE [NAD(+)] 2, CHLOROPLASTIC"/>
    <property type="match status" value="1"/>
</dbReference>
<dbReference type="Pfam" id="PF07479">
    <property type="entry name" value="NAD_Gly3P_dh_C"/>
    <property type="match status" value="1"/>
</dbReference>
<dbReference type="Pfam" id="PF01210">
    <property type="entry name" value="NAD_Gly3P_dh_N"/>
    <property type="match status" value="1"/>
</dbReference>
<dbReference type="PIRSF" id="PIRSF000114">
    <property type="entry name" value="Glycerol-3-P_dh"/>
    <property type="match status" value="1"/>
</dbReference>
<dbReference type="PRINTS" id="PR00077">
    <property type="entry name" value="GPDHDRGNASE"/>
</dbReference>
<dbReference type="SUPFAM" id="SSF48179">
    <property type="entry name" value="6-phosphogluconate dehydrogenase C-terminal domain-like"/>
    <property type="match status" value="1"/>
</dbReference>
<dbReference type="SUPFAM" id="SSF51735">
    <property type="entry name" value="NAD(P)-binding Rossmann-fold domains"/>
    <property type="match status" value="1"/>
</dbReference>
<dbReference type="PROSITE" id="PS00957">
    <property type="entry name" value="NAD_G3PDH"/>
    <property type="match status" value="1"/>
</dbReference>
<protein>
    <recommendedName>
        <fullName evidence="1">Glycerol-3-phosphate dehydrogenase [NAD(P)+]</fullName>
        <ecNumber evidence="1">1.1.1.94</ecNumber>
    </recommendedName>
    <alternativeName>
        <fullName evidence="1">NAD(P)(+)-dependent glycerol-3-phosphate dehydrogenase</fullName>
    </alternativeName>
    <alternativeName>
        <fullName evidence="1">NAD(P)H-dependent dihydroxyacetone-phosphate reductase</fullName>
    </alternativeName>
</protein>
<organism>
    <name type="scientific">Aeromonas salmonicida (strain A449)</name>
    <dbReference type="NCBI Taxonomy" id="382245"/>
    <lineage>
        <taxon>Bacteria</taxon>
        <taxon>Pseudomonadati</taxon>
        <taxon>Pseudomonadota</taxon>
        <taxon>Gammaproteobacteria</taxon>
        <taxon>Aeromonadales</taxon>
        <taxon>Aeromonadaceae</taxon>
        <taxon>Aeromonas</taxon>
    </lineage>
</organism>
<feature type="chain" id="PRO_1000049480" description="Glycerol-3-phosphate dehydrogenase [NAD(P)+]">
    <location>
        <begin position="1"/>
        <end position="334"/>
    </location>
</feature>
<feature type="active site" description="Proton acceptor" evidence="1">
    <location>
        <position position="194"/>
    </location>
</feature>
<feature type="binding site" evidence="1">
    <location>
        <position position="14"/>
    </location>
    <ligand>
        <name>NADPH</name>
        <dbReference type="ChEBI" id="CHEBI:57783"/>
    </ligand>
</feature>
<feature type="binding site" evidence="1">
    <location>
        <position position="15"/>
    </location>
    <ligand>
        <name>NADPH</name>
        <dbReference type="ChEBI" id="CHEBI:57783"/>
    </ligand>
</feature>
<feature type="binding site" evidence="1">
    <location>
        <position position="35"/>
    </location>
    <ligand>
        <name>NADPH</name>
        <dbReference type="ChEBI" id="CHEBI:57783"/>
    </ligand>
</feature>
<feature type="binding site" evidence="1">
    <location>
        <position position="109"/>
    </location>
    <ligand>
        <name>NADPH</name>
        <dbReference type="ChEBI" id="CHEBI:57783"/>
    </ligand>
</feature>
<feature type="binding site" evidence="1">
    <location>
        <position position="109"/>
    </location>
    <ligand>
        <name>sn-glycerol 3-phosphate</name>
        <dbReference type="ChEBI" id="CHEBI:57597"/>
    </ligand>
</feature>
<feature type="binding site" evidence="1">
    <location>
        <position position="138"/>
    </location>
    <ligand>
        <name>sn-glycerol 3-phosphate</name>
        <dbReference type="ChEBI" id="CHEBI:57597"/>
    </ligand>
</feature>
<feature type="binding site" evidence="1">
    <location>
        <position position="140"/>
    </location>
    <ligand>
        <name>sn-glycerol 3-phosphate</name>
        <dbReference type="ChEBI" id="CHEBI:57597"/>
    </ligand>
</feature>
<feature type="binding site" evidence="1">
    <location>
        <position position="142"/>
    </location>
    <ligand>
        <name>NADPH</name>
        <dbReference type="ChEBI" id="CHEBI:57783"/>
    </ligand>
</feature>
<feature type="binding site" evidence="1">
    <location>
        <position position="194"/>
    </location>
    <ligand>
        <name>sn-glycerol 3-phosphate</name>
        <dbReference type="ChEBI" id="CHEBI:57597"/>
    </ligand>
</feature>
<feature type="binding site" evidence="1">
    <location>
        <position position="247"/>
    </location>
    <ligand>
        <name>sn-glycerol 3-phosphate</name>
        <dbReference type="ChEBI" id="CHEBI:57597"/>
    </ligand>
</feature>
<feature type="binding site" evidence="1">
    <location>
        <position position="257"/>
    </location>
    <ligand>
        <name>sn-glycerol 3-phosphate</name>
        <dbReference type="ChEBI" id="CHEBI:57597"/>
    </ligand>
</feature>
<feature type="binding site" evidence="1">
    <location>
        <position position="258"/>
    </location>
    <ligand>
        <name>NADPH</name>
        <dbReference type="ChEBI" id="CHEBI:57783"/>
    </ligand>
</feature>
<feature type="binding site" evidence="1">
    <location>
        <position position="258"/>
    </location>
    <ligand>
        <name>sn-glycerol 3-phosphate</name>
        <dbReference type="ChEBI" id="CHEBI:57597"/>
    </ligand>
</feature>
<feature type="binding site" evidence="1">
    <location>
        <position position="259"/>
    </location>
    <ligand>
        <name>sn-glycerol 3-phosphate</name>
        <dbReference type="ChEBI" id="CHEBI:57597"/>
    </ligand>
</feature>
<feature type="binding site" evidence="1">
    <location>
        <position position="282"/>
    </location>
    <ligand>
        <name>NADPH</name>
        <dbReference type="ChEBI" id="CHEBI:57783"/>
    </ligand>
</feature>
<feature type="binding site" evidence="1">
    <location>
        <position position="284"/>
    </location>
    <ligand>
        <name>NADPH</name>
        <dbReference type="ChEBI" id="CHEBI:57783"/>
    </ligand>
</feature>
<gene>
    <name evidence="1" type="primary">gpsA</name>
    <name type="ordered locus">ASA_4101</name>
</gene>